<dbReference type="EMBL" id="AL009126">
    <property type="protein sequence ID" value="CAB14113.1"/>
    <property type="molecule type" value="Genomic_DNA"/>
</dbReference>
<dbReference type="PIR" id="E69943">
    <property type="entry name" value="E69943"/>
</dbReference>
<dbReference type="RefSeq" id="NP_390078.1">
    <property type="nucleotide sequence ID" value="NC_000964.3"/>
</dbReference>
<dbReference type="RefSeq" id="WP_004398863.1">
    <property type="nucleotide sequence ID" value="NZ_OZ025638.1"/>
</dbReference>
<dbReference type="SMR" id="O32007"/>
<dbReference type="FunCoup" id="O32007">
    <property type="interactions" value="11"/>
</dbReference>
<dbReference type="PaxDb" id="224308-BSU21950"/>
<dbReference type="EnsemblBacteria" id="CAB14113">
    <property type="protein sequence ID" value="CAB14113"/>
    <property type="gene ID" value="BSU_21950"/>
</dbReference>
<dbReference type="GeneID" id="939078"/>
<dbReference type="KEGG" id="bsu:BSU21950"/>
<dbReference type="PATRIC" id="fig|224308.179.peg.2397"/>
<dbReference type="InParanoid" id="O32007"/>
<dbReference type="OrthoDB" id="2933821at2"/>
<dbReference type="BioCyc" id="BSUB:BSU21950-MONOMER"/>
<dbReference type="Proteomes" id="UP000001570">
    <property type="component" value="Chromosome"/>
</dbReference>
<dbReference type="InterPro" id="IPR020314">
    <property type="entry name" value="Uncharacterised_YpzA"/>
</dbReference>
<dbReference type="Pfam" id="PF10819">
    <property type="entry name" value="DUF2564"/>
    <property type="match status" value="1"/>
</dbReference>
<feature type="chain" id="PRO_0000049733" description="Uncharacterized protein YpzA">
    <location>
        <begin position="1"/>
        <end position="89"/>
    </location>
</feature>
<organism>
    <name type="scientific">Bacillus subtilis (strain 168)</name>
    <dbReference type="NCBI Taxonomy" id="224308"/>
    <lineage>
        <taxon>Bacteria</taxon>
        <taxon>Bacillati</taxon>
        <taxon>Bacillota</taxon>
        <taxon>Bacilli</taxon>
        <taxon>Bacillales</taxon>
        <taxon>Bacillaceae</taxon>
        <taxon>Bacillus</taxon>
    </lineage>
</organism>
<proteinExistence type="predicted"/>
<name>YPZA_BACSU</name>
<sequence length="89" mass="10062">MTSEFHNEDQTGFTDKRQLELAVETAQKTTGAATRGQSKTLVDSAYQAIEDARELSQSEELAALDDPEFVKQQQQLLDDSEHQLDEFKE</sequence>
<reference key="1">
    <citation type="journal article" date="1997" name="Nature">
        <title>The complete genome sequence of the Gram-positive bacterium Bacillus subtilis.</title>
        <authorList>
            <person name="Kunst F."/>
            <person name="Ogasawara N."/>
            <person name="Moszer I."/>
            <person name="Albertini A.M."/>
            <person name="Alloni G."/>
            <person name="Azevedo V."/>
            <person name="Bertero M.G."/>
            <person name="Bessieres P."/>
            <person name="Bolotin A."/>
            <person name="Borchert S."/>
            <person name="Borriss R."/>
            <person name="Boursier L."/>
            <person name="Brans A."/>
            <person name="Braun M."/>
            <person name="Brignell S.C."/>
            <person name="Bron S."/>
            <person name="Brouillet S."/>
            <person name="Bruschi C.V."/>
            <person name="Caldwell B."/>
            <person name="Capuano V."/>
            <person name="Carter N.M."/>
            <person name="Choi S.-K."/>
            <person name="Codani J.-J."/>
            <person name="Connerton I.F."/>
            <person name="Cummings N.J."/>
            <person name="Daniel R.A."/>
            <person name="Denizot F."/>
            <person name="Devine K.M."/>
            <person name="Duesterhoeft A."/>
            <person name="Ehrlich S.D."/>
            <person name="Emmerson P.T."/>
            <person name="Entian K.-D."/>
            <person name="Errington J."/>
            <person name="Fabret C."/>
            <person name="Ferrari E."/>
            <person name="Foulger D."/>
            <person name="Fritz C."/>
            <person name="Fujita M."/>
            <person name="Fujita Y."/>
            <person name="Fuma S."/>
            <person name="Galizzi A."/>
            <person name="Galleron N."/>
            <person name="Ghim S.-Y."/>
            <person name="Glaser P."/>
            <person name="Goffeau A."/>
            <person name="Golightly E.J."/>
            <person name="Grandi G."/>
            <person name="Guiseppi G."/>
            <person name="Guy B.J."/>
            <person name="Haga K."/>
            <person name="Haiech J."/>
            <person name="Harwood C.R."/>
            <person name="Henaut A."/>
            <person name="Hilbert H."/>
            <person name="Holsappel S."/>
            <person name="Hosono S."/>
            <person name="Hullo M.-F."/>
            <person name="Itaya M."/>
            <person name="Jones L.-M."/>
            <person name="Joris B."/>
            <person name="Karamata D."/>
            <person name="Kasahara Y."/>
            <person name="Klaerr-Blanchard M."/>
            <person name="Klein C."/>
            <person name="Kobayashi Y."/>
            <person name="Koetter P."/>
            <person name="Koningstein G."/>
            <person name="Krogh S."/>
            <person name="Kumano M."/>
            <person name="Kurita K."/>
            <person name="Lapidus A."/>
            <person name="Lardinois S."/>
            <person name="Lauber J."/>
            <person name="Lazarevic V."/>
            <person name="Lee S.-M."/>
            <person name="Levine A."/>
            <person name="Liu H."/>
            <person name="Masuda S."/>
            <person name="Mauel C."/>
            <person name="Medigue C."/>
            <person name="Medina N."/>
            <person name="Mellado R.P."/>
            <person name="Mizuno M."/>
            <person name="Moestl D."/>
            <person name="Nakai S."/>
            <person name="Noback M."/>
            <person name="Noone D."/>
            <person name="O'Reilly M."/>
            <person name="Ogawa K."/>
            <person name="Ogiwara A."/>
            <person name="Oudega B."/>
            <person name="Park S.-H."/>
            <person name="Parro V."/>
            <person name="Pohl T.M."/>
            <person name="Portetelle D."/>
            <person name="Porwollik S."/>
            <person name="Prescott A.M."/>
            <person name="Presecan E."/>
            <person name="Pujic P."/>
            <person name="Purnelle B."/>
            <person name="Rapoport G."/>
            <person name="Rey M."/>
            <person name="Reynolds S."/>
            <person name="Rieger M."/>
            <person name="Rivolta C."/>
            <person name="Rocha E."/>
            <person name="Roche B."/>
            <person name="Rose M."/>
            <person name="Sadaie Y."/>
            <person name="Sato T."/>
            <person name="Scanlan E."/>
            <person name="Schleich S."/>
            <person name="Schroeter R."/>
            <person name="Scoffone F."/>
            <person name="Sekiguchi J."/>
            <person name="Sekowska A."/>
            <person name="Seror S.J."/>
            <person name="Serror P."/>
            <person name="Shin B.-S."/>
            <person name="Soldo B."/>
            <person name="Sorokin A."/>
            <person name="Tacconi E."/>
            <person name="Takagi T."/>
            <person name="Takahashi H."/>
            <person name="Takemaru K."/>
            <person name="Takeuchi M."/>
            <person name="Tamakoshi A."/>
            <person name="Tanaka T."/>
            <person name="Terpstra P."/>
            <person name="Tognoni A."/>
            <person name="Tosato V."/>
            <person name="Uchiyama S."/>
            <person name="Vandenbol M."/>
            <person name="Vannier F."/>
            <person name="Vassarotti A."/>
            <person name="Viari A."/>
            <person name="Wambutt R."/>
            <person name="Wedler E."/>
            <person name="Wedler H."/>
            <person name="Weitzenegger T."/>
            <person name="Winters P."/>
            <person name="Wipat A."/>
            <person name="Yamamoto H."/>
            <person name="Yamane K."/>
            <person name="Yasumoto K."/>
            <person name="Yata K."/>
            <person name="Yoshida K."/>
            <person name="Yoshikawa H.-F."/>
            <person name="Zumstein E."/>
            <person name="Yoshikawa H."/>
            <person name="Danchin A."/>
        </authorList>
    </citation>
    <scope>NUCLEOTIDE SEQUENCE [LARGE SCALE GENOMIC DNA]</scope>
    <source>
        <strain>168</strain>
    </source>
</reference>
<keyword id="KW-1185">Reference proteome</keyword>
<accession>O32007</accession>
<protein>
    <recommendedName>
        <fullName>Uncharacterized protein YpzA</fullName>
    </recommendedName>
</protein>
<gene>
    <name type="primary">ypzA</name>
    <name type="ordered locus">BSU21950</name>
</gene>